<evidence type="ECO:0000255" key="1">
    <source>
        <dbReference type="HAMAP-Rule" id="MF_00539"/>
    </source>
</evidence>
<evidence type="ECO:0000305" key="2"/>
<comment type="similarity">
    <text evidence="1">Belongs to the bacterial ribosomal protein bL27 family.</text>
</comment>
<accession>B8D9H1</accession>
<name>RL27_BUCA5</name>
<feature type="chain" id="PRO_1000146514" description="Large ribosomal subunit protein bL27">
    <location>
        <begin position="1"/>
        <end position="84"/>
    </location>
</feature>
<organism>
    <name type="scientific">Buchnera aphidicola subsp. Acyrthosiphon pisum (strain 5A)</name>
    <dbReference type="NCBI Taxonomy" id="563178"/>
    <lineage>
        <taxon>Bacteria</taxon>
        <taxon>Pseudomonadati</taxon>
        <taxon>Pseudomonadota</taxon>
        <taxon>Gammaproteobacteria</taxon>
        <taxon>Enterobacterales</taxon>
        <taxon>Erwiniaceae</taxon>
        <taxon>Buchnera</taxon>
    </lineage>
</organism>
<sequence>MAHKKAGGSTRNGRDSNAQRLGVKCFGGQLISAGSIIVKQRGTKFHPGKNVGCGKDHTIFAIVKGKVEFKKKGLKKRTYINIIN</sequence>
<reference key="1">
    <citation type="journal article" date="2009" name="Science">
        <title>The dynamics and time scale of ongoing genomic erosion in symbiotic bacteria.</title>
        <authorList>
            <person name="Moran N.A."/>
            <person name="McLaughlin H.J."/>
            <person name="Sorek R."/>
        </authorList>
    </citation>
    <scope>NUCLEOTIDE SEQUENCE [LARGE SCALE GENOMIC DNA]</scope>
    <source>
        <strain>5A</strain>
    </source>
</reference>
<keyword id="KW-0687">Ribonucleoprotein</keyword>
<keyword id="KW-0689">Ribosomal protein</keyword>
<protein>
    <recommendedName>
        <fullName evidence="1">Large ribosomal subunit protein bL27</fullName>
    </recommendedName>
    <alternativeName>
        <fullName evidence="2">50S ribosomal protein L27</fullName>
    </alternativeName>
</protein>
<dbReference type="EMBL" id="CP001161">
    <property type="protein sequence ID" value="ACL30742.1"/>
    <property type="molecule type" value="Genomic_DNA"/>
</dbReference>
<dbReference type="RefSeq" id="WP_009874345.1">
    <property type="nucleotide sequence ID" value="NC_011833.1"/>
</dbReference>
<dbReference type="SMR" id="B8D9H1"/>
<dbReference type="KEGG" id="bap:BUAP5A_381"/>
<dbReference type="HOGENOM" id="CLU_095424_4_1_6"/>
<dbReference type="OrthoDB" id="9803474at2"/>
<dbReference type="Proteomes" id="UP000006904">
    <property type="component" value="Chromosome"/>
</dbReference>
<dbReference type="GO" id="GO:0022625">
    <property type="term" value="C:cytosolic large ribosomal subunit"/>
    <property type="evidence" value="ECO:0007669"/>
    <property type="project" value="TreeGrafter"/>
</dbReference>
<dbReference type="GO" id="GO:0003735">
    <property type="term" value="F:structural constituent of ribosome"/>
    <property type="evidence" value="ECO:0007669"/>
    <property type="project" value="InterPro"/>
</dbReference>
<dbReference type="GO" id="GO:0006412">
    <property type="term" value="P:translation"/>
    <property type="evidence" value="ECO:0007669"/>
    <property type="project" value="UniProtKB-UniRule"/>
</dbReference>
<dbReference type="FunFam" id="2.40.50.100:FF:000020">
    <property type="entry name" value="50S ribosomal protein L27"/>
    <property type="match status" value="1"/>
</dbReference>
<dbReference type="Gene3D" id="2.40.50.100">
    <property type="match status" value="1"/>
</dbReference>
<dbReference type="HAMAP" id="MF_00539">
    <property type="entry name" value="Ribosomal_bL27"/>
    <property type="match status" value="1"/>
</dbReference>
<dbReference type="InterPro" id="IPR001684">
    <property type="entry name" value="Ribosomal_bL27"/>
</dbReference>
<dbReference type="NCBIfam" id="TIGR00062">
    <property type="entry name" value="L27"/>
    <property type="match status" value="1"/>
</dbReference>
<dbReference type="PANTHER" id="PTHR15893:SF0">
    <property type="entry name" value="LARGE RIBOSOMAL SUBUNIT PROTEIN BL27M"/>
    <property type="match status" value="1"/>
</dbReference>
<dbReference type="PANTHER" id="PTHR15893">
    <property type="entry name" value="RIBOSOMAL PROTEIN L27"/>
    <property type="match status" value="1"/>
</dbReference>
<dbReference type="Pfam" id="PF01016">
    <property type="entry name" value="Ribosomal_L27"/>
    <property type="match status" value="1"/>
</dbReference>
<dbReference type="PRINTS" id="PR00063">
    <property type="entry name" value="RIBOSOMALL27"/>
</dbReference>
<dbReference type="SUPFAM" id="SSF110324">
    <property type="entry name" value="Ribosomal L27 protein-like"/>
    <property type="match status" value="1"/>
</dbReference>
<proteinExistence type="inferred from homology"/>
<gene>
    <name evidence="1" type="primary">rpmA</name>
    <name type="ordered locus">BUAP5A_381</name>
</gene>